<reference key="1">
    <citation type="journal article" date="2003" name="Proc. Natl. Acad. Sci. U.S.A.">
        <title>An interacting network of T-box genes directs gene expression and fate in the zebrafish mesoderm.</title>
        <authorList>
            <person name="Goering L.M."/>
            <person name="Hoshijima K."/>
            <person name="Hug B."/>
            <person name="Bisgrove B."/>
            <person name="Kispert A."/>
            <person name="Grunwald D.J."/>
        </authorList>
    </citation>
    <scope>NUCLEOTIDE SEQUENCE [MRNA]</scope>
    <scope>FUNCTION</scope>
</reference>
<reference key="2">
    <citation type="journal article" date="2003" name="Dev. Genes Evol.">
        <title>Characterization and expression of a presomitic mesoderm-specific mespo gene in zebrafish.</title>
        <authorList>
            <person name="Yoo K.-W."/>
            <person name="Kim C.-H."/>
            <person name="Park H.-C."/>
            <person name="Kim S.-H."/>
            <person name="Kim H.-S."/>
            <person name="Hong S.-K."/>
            <person name="Han S."/>
            <person name="Rhee M."/>
            <person name="Huh T.-L."/>
        </authorList>
    </citation>
    <scope>NUCLEOTIDE SEQUENCE [MRNA]</scope>
    <scope>DEVELOPMENTAL STAGE</scope>
    <source>
        <tissue>Embryo</tissue>
    </source>
</reference>
<reference key="3">
    <citation type="submission" date="2001-05" db="EMBL/GenBank/DDBJ databases">
        <title>Danio rerio mRNA for zf-pMesogenin.</title>
        <authorList>
            <person name="Alt B."/>
            <person name="Tautz D."/>
            <person name="Gajewski M."/>
        </authorList>
    </citation>
    <scope>NUCLEOTIDE SEQUENCE [MRNA]</scope>
</reference>
<reference key="4">
    <citation type="journal article" date="2013" name="Nature">
        <title>The zebrafish reference genome sequence and its relationship to the human genome.</title>
        <authorList>
            <person name="Howe K."/>
            <person name="Clark M.D."/>
            <person name="Torroja C.F."/>
            <person name="Torrance J."/>
            <person name="Berthelot C."/>
            <person name="Muffato M."/>
            <person name="Collins J.E."/>
            <person name="Humphray S."/>
            <person name="McLaren K."/>
            <person name="Matthews L."/>
            <person name="McLaren S."/>
            <person name="Sealy I."/>
            <person name="Caccamo M."/>
            <person name="Churcher C."/>
            <person name="Scott C."/>
            <person name="Barrett J.C."/>
            <person name="Koch R."/>
            <person name="Rauch G.J."/>
            <person name="White S."/>
            <person name="Chow W."/>
            <person name="Kilian B."/>
            <person name="Quintais L.T."/>
            <person name="Guerra-Assuncao J.A."/>
            <person name="Zhou Y."/>
            <person name="Gu Y."/>
            <person name="Yen J."/>
            <person name="Vogel J.H."/>
            <person name="Eyre T."/>
            <person name="Redmond S."/>
            <person name="Banerjee R."/>
            <person name="Chi J."/>
            <person name="Fu B."/>
            <person name="Langley E."/>
            <person name="Maguire S.F."/>
            <person name="Laird G.K."/>
            <person name="Lloyd D."/>
            <person name="Kenyon E."/>
            <person name="Donaldson S."/>
            <person name="Sehra H."/>
            <person name="Almeida-King J."/>
            <person name="Loveland J."/>
            <person name="Trevanion S."/>
            <person name="Jones M."/>
            <person name="Quail M."/>
            <person name="Willey D."/>
            <person name="Hunt A."/>
            <person name="Burton J."/>
            <person name="Sims S."/>
            <person name="McLay K."/>
            <person name="Plumb B."/>
            <person name="Davis J."/>
            <person name="Clee C."/>
            <person name="Oliver K."/>
            <person name="Clark R."/>
            <person name="Riddle C."/>
            <person name="Elliot D."/>
            <person name="Threadgold G."/>
            <person name="Harden G."/>
            <person name="Ware D."/>
            <person name="Begum S."/>
            <person name="Mortimore B."/>
            <person name="Kerry G."/>
            <person name="Heath P."/>
            <person name="Phillimore B."/>
            <person name="Tracey A."/>
            <person name="Corby N."/>
            <person name="Dunn M."/>
            <person name="Johnson C."/>
            <person name="Wood J."/>
            <person name="Clark S."/>
            <person name="Pelan S."/>
            <person name="Griffiths G."/>
            <person name="Smith M."/>
            <person name="Glithero R."/>
            <person name="Howden P."/>
            <person name="Barker N."/>
            <person name="Lloyd C."/>
            <person name="Stevens C."/>
            <person name="Harley J."/>
            <person name="Holt K."/>
            <person name="Panagiotidis G."/>
            <person name="Lovell J."/>
            <person name="Beasley H."/>
            <person name="Henderson C."/>
            <person name="Gordon D."/>
            <person name="Auger K."/>
            <person name="Wright D."/>
            <person name="Collins J."/>
            <person name="Raisen C."/>
            <person name="Dyer L."/>
            <person name="Leung K."/>
            <person name="Robertson L."/>
            <person name="Ambridge K."/>
            <person name="Leongamornlert D."/>
            <person name="McGuire S."/>
            <person name="Gilderthorp R."/>
            <person name="Griffiths C."/>
            <person name="Manthravadi D."/>
            <person name="Nichol S."/>
            <person name="Barker G."/>
            <person name="Whitehead S."/>
            <person name="Kay M."/>
            <person name="Brown J."/>
            <person name="Murnane C."/>
            <person name="Gray E."/>
            <person name="Humphries M."/>
            <person name="Sycamore N."/>
            <person name="Barker D."/>
            <person name="Saunders D."/>
            <person name="Wallis J."/>
            <person name="Babbage A."/>
            <person name="Hammond S."/>
            <person name="Mashreghi-Mohammadi M."/>
            <person name="Barr L."/>
            <person name="Martin S."/>
            <person name="Wray P."/>
            <person name="Ellington A."/>
            <person name="Matthews N."/>
            <person name="Ellwood M."/>
            <person name="Woodmansey R."/>
            <person name="Clark G."/>
            <person name="Cooper J."/>
            <person name="Tromans A."/>
            <person name="Grafham D."/>
            <person name="Skuce C."/>
            <person name="Pandian R."/>
            <person name="Andrews R."/>
            <person name="Harrison E."/>
            <person name="Kimberley A."/>
            <person name="Garnett J."/>
            <person name="Fosker N."/>
            <person name="Hall R."/>
            <person name="Garner P."/>
            <person name="Kelly D."/>
            <person name="Bird C."/>
            <person name="Palmer S."/>
            <person name="Gehring I."/>
            <person name="Berger A."/>
            <person name="Dooley C.M."/>
            <person name="Ersan-Urun Z."/>
            <person name="Eser C."/>
            <person name="Geiger H."/>
            <person name="Geisler M."/>
            <person name="Karotki L."/>
            <person name="Kirn A."/>
            <person name="Konantz J."/>
            <person name="Konantz M."/>
            <person name="Oberlander M."/>
            <person name="Rudolph-Geiger S."/>
            <person name="Teucke M."/>
            <person name="Lanz C."/>
            <person name="Raddatz G."/>
            <person name="Osoegawa K."/>
            <person name="Zhu B."/>
            <person name="Rapp A."/>
            <person name="Widaa S."/>
            <person name="Langford C."/>
            <person name="Yang F."/>
            <person name="Schuster S.C."/>
            <person name="Carter N.P."/>
            <person name="Harrow J."/>
            <person name="Ning Z."/>
            <person name="Herrero J."/>
            <person name="Searle S.M."/>
            <person name="Enright A."/>
            <person name="Geisler R."/>
            <person name="Plasterk R.H."/>
            <person name="Lee C."/>
            <person name="Westerfield M."/>
            <person name="de Jong P.J."/>
            <person name="Zon L.I."/>
            <person name="Postlethwait J.H."/>
            <person name="Nusslein-Volhard C."/>
            <person name="Hubbard T.J."/>
            <person name="Roest Crollius H."/>
            <person name="Rogers J."/>
            <person name="Stemple D.L."/>
        </authorList>
    </citation>
    <scope>NUCLEOTIDE SEQUENCE [LARGE SCALE GENOMIC DNA]</scope>
    <source>
        <strain>Tuebingen</strain>
    </source>
</reference>
<reference key="5">
    <citation type="submission" date="2007-09" db="EMBL/GenBank/DDBJ databases">
        <authorList>
            <consortium name="NIH - Zebrafish Gene Collection (ZGC) project"/>
        </authorList>
    </citation>
    <scope>NUCLEOTIDE SEQUENCE [LARGE SCALE MRNA]</scope>
    <source>
        <tissue>Embryo</tissue>
    </source>
</reference>
<feature type="chain" id="PRO_0000330033" description="Mesogenin-1">
    <location>
        <begin position="1"/>
        <end position="131"/>
    </location>
</feature>
<feature type="domain" description="bHLH" evidence="2">
    <location>
        <begin position="70"/>
        <end position="124"/>
    </location>
</feature>
<feature type="region of interest" description="Disordered" evidence="3">
    <location>
        <begin position="22"/>
        <end position="79"/>
    </location>
</feature>
<feature type="compositionally biased region" description="Low complexity" evidence="3">
    <location>
        <begin position="27"/>
        <end position="45"/>
    </location>
</feature>
<feature type="compositionally biased region" description="Basic residues" evidence="3">
    <location>
        <begin position="63"/>
        <end position="73"/>
    </location>
</feature>
<feature type="sequence conflict" description="In Ref. 5; AAI53477." evidence="6" ref="5">
    <original>K</original>
    <variation>E</variation>
    <location>
        <position position="74"/>
    </location>
</feature>
<feature type="sequence conflict" description="In Ref. 5; AAH92683." evidence="6" ref="5">
    <original>K</original>
    <variation>R</variation>
    <location>
        <position position="115"/>
    </location>
</feature>
<protein>
    <recommendedName>
        <fullName>Mesogenin-1</fullName>
    </recommendedName>
    <alternativeName>
        <fullName>MesP-related bHLH factor</fullName>
    </alternativeName>
    <alternativeName>
        <fullName>Paraxial mesoderm-specific expression and regulatory capacities</fullName>
    </alternativeName>
    <alternativeName>
        <fullName>pMesogenin1</fullName>
        <shortName>pMsgn1</shortName>
    </alternativeName>
</protein>
<sequence>MAQIDVDVFTAKVLSHWDWSREDRSFGDSASSPESESFDSACSSPDARSSPTAGCEHAEQQKPKVKMSMRRRMKASEREKLRMRSLAEALHQLRDYLPPGYSRRGQPLTKIQTLKYTIQYIKELSGILEQQ</sequence>
<dbReference type="EMBL" id="AY150226">
    <property type="protein sequence ID" value="AAN65633.1"/>
    <property type="molecule type" value="mRNA"/>
</dbReference>
<dbReference type="EMBL" id="AF409108">
    <property type="protein sequence ID" value="AAN75769.1"/>
    <property type="molecule type" value="mRNA"/>
</dbReference>
<dbReference type="EMBL" id="AJ309314">
    <property type="protein sequence ID" value="CAC38843.1"/>
    <property type="molecule type" value="mRNA"/>
</dbReference>
<dbReference type="EMBL" id="BX640590">
    <property type="protein sequence ID" value="CAH68945.1"/>
    <property type="molecule type" value="Genomic_DNA"/>
</dbReference>
<dbReference type="EMBL" id="BX890562">
    <property type="protein sequence ID" value="CAK04569.1"/>
    <property type="molecule type" value="Genomic_DNA"/>
</dbReference>
<dbReference type="EMBL" id="BC092683">
    <property type="protein sequence ID" value="AAH92683.1"/>
    <property type="molecule type" value="mRNA"/>
</dbReference>
<dbReference type="EMBL" id="BC153476">
    <property type="protein sequence ID" value="AAI53477.1"/>
    <property type="molecule type" value="mRNA"/>
</dbReference>
<dbReference type="RefSeq" id="NP_878302.1">
    <property type="nucleotide sequence ID" value="NM_182882.2"/>
</dbReference>
<dbReference type="SMR" id="Q90ZL1"/>
<dbReference type="FunCoup" id="Q90ZL1">
    <property type="interactions" value="36"/>
</dbReference>
<dbReference type="STRING" id="7955.ENSDARP00000094435"/>
<dbReference type="PaxDb" id="7955-ENSDARP00000094435"/>
<dbReference type="Ensembl" id="ENSDART00000103659">
    <property type="protein sequence ID" value="ENSDARP00000094435"/>
    <property type="gene ID" value="ENSDARG00000070546"/>
</dbReference>
<dbReference type="GeneID" id="360135"/>
<dbReference type="KEGG" id="dre:360135"/>
<dbReference type="AGR" id="ZFIN:ZDB-GENE-030722-1"/>
<dbReference type="CTD" id="343930"/>
<dbReference type="ZFIN" id="ZDB-GENE-030722-1">
    <property type="gene designation" value="msgn1"/>
</dbReference>
<dbReference type="eggNOG" id="KOG4029">
    <property type="taxonomic scope" value="Eukaryota"/>
</dbReference>
<dbReference type="HOGENOM" id="CLU_084234_1_1_1"/>
<dbReference type="InParanoid" id="Q90ZL1"/>
<dbReference type="OMA" id="SSPEMCY"/>
<dbReference type="OrthoDB" id="10063280at2759"/>
<dbReference type="PhylomeDB" id="Q90ZL1"/>
<dbReference type="TreeFam" id="TF325707"/>
<dbReference type="PRO" id="PR:Q90ZL1"/>
<dbReference type="Proteomes" id="UP000000437">
    <property type="component" value="Chromosome 4"/>
</dbReference>
<dbReference type="Bgee" id="ENSDARG00000070546">
    <property type="expression patterns" value="Expressed in tail bud paraxial mesoderm and 11 other cell types or tissues"/>
</dbReference>
<dbReference type="GO" id="GO:0005634">
    <property type="term" value="C:nucleus"/>
    <property type="evidence" value="ECO:0000318"/>
    <property type="project" value="GO_Central"/>
</dbReference>
<dbReference type="GO" id="GO:0000981">
    <property type="term" value="F:DNA-binding transcription factor activity, RNA polymerase II-specific"/>
    <property type="evidence" value="ECO:0000318"/>
    <property type="project" value="GO_Central"/>
</dbReference>
<dbReference type="GO" id="GO:0046983">
    <property type="term" value="F:protein dimerization activity"/>
    <property type="evidence" value="ECO:0007669"/>
    <property type="project" value="InterPro"/>
</dbReference>
<dbReference type="GO" id="GO:0000978">
    <property type="term" value="F:RNA polymerase II cis-regulatory region sequence-specific DNA binding"/>
    <property type="evidence" value="ECO:0000318"/>
    <property type="project" value="GO_Central"/>
</dbReference>
<dbReference type="GO" id="GO:0007498">
    <property type="term" value="P:mesoderm development"/>
    <property type="evidence" value="ECO:0000316"/>
    <property type="project" value="ZFIN"/>
</dbReference>
<dbReference type="GO" id="GO:0001707">
    <property type="term" value="P:mesoderm formation"/>
    <property type="evidence" value="ECO:0000318"/>
    <property type="project" value="GO_Central"/>
</dbReference>
<dbReference type="GO" id="GO:0048342">
    <property type="term" value="P:paraxial mesodermal cell differentiation"/>
    <property type="evidence" value="ECO:0000315"/>
    <property type="project" value="ZFIN"/>
</dbReference>
<dbReference type="GO" id="GO:0006357">
    <property type="term" value="P:regulation of transcription by RNA polymerase II"/>
    <property type="evidence" value="ECO:0000315"/>
    <property type="project" value="ZFIN"/>
</dbReference>
<dbReference type="GO" id="GO:0007525">
    <property type="term" value="P:somatic muscle development"/>
    <property type="evidence" value="ECO:0000316"/>
    <property type="project" value="ZFIN"/>
</dbReference>
<dbReference type="CDD" id="cd18939">
    <property type="entry name" value="bHLH_TS_Msgn1"/>
    <property type="match status" value="1"/>
</dbReference>
<dbReference type="FunFam" id="4.10.280.10:FF:000056">
    <property type="entry name" value="mesogenin-1"/>
    <property type="match status" value="1"/>
</dbReference>
<dbReference type="Gene3D" id="4.10.280.10">
    <property type="entry name" value="Helix-loop-helix DNA-binding domain"/>
    <property type="match status" value="1"/>
</dbReference>
<dbReference type="InterPro" id="IPR011598">
    <property type="entry name" value="bHLH_dom"/>
</dbReference>
<dbReference type="InterPro" id="IPR036638">
    <property type="entry name" value="HLH_DNA-bd_sf"/>
</dbReference>
<dbReference type="InterPro" id="IPR040259">
    <property type="entry name" value="Mesogenin/MesP"/>
</dbReference>
<dbReference type="PANTHER" id="PTHR20937">
    <property type="entry name" value="IP14615P"/>
    <property type="match status" value="1"/>
</dbReference>
<dbReference type="PANTHER" id="PTHR20937:SF4">
    <property type="entry name" value="MESOGENIN-1"/>
    <property type="match status" value="1"/>
</dbReference>
<dbReference type="Pfam" id="PF00010">
    <property type="entry name" value="HLH"/>
    <property type="match status" value="1"/>
</dbReference>
<dbReference type="SMART" id="SM00353">
    <property type="entry name" value="HLH"/>
    <property type="match status" value="1"/>
</dbReference>
<dbReference type="SUPFAM" id="SSF47459">
    <property type="entry name" value="HLH, helix-loop-helix DNA-binding domain"/>
    <property type="match status" value="1"/>
</dbReference>
<dbReference type="PROSITE" id="PS50888">
    <property type="entry name" value="BHLH"/>
    <property type="match status" value="1"/>
</dbReference>
<organism>
    <name type="scientific">Danio rerio</name>
    <name type="common">Zebrafish</name>
    <name type="synonym">Brachydanio rerio</name>
    <dbReference type="NCBI Taxonomy" id="7955"/>
    <lineage>
        <taxon>Eukaryota</taxon>
        <taxon>Metazoa</taxon>
        <taxon>Chordata</taxon>
        <taxon>Craniata</taxon>
        <taxon>Vertebrata</taxon>
        <taxon>Euteleostomi</taxon>
        <taxon>Actinopterygii</taxon>
        <taxon>Neopterygii</taxon>
        <taxon>Teleostei</taxon>
        <taxon>Ostariophysi</taxon>
        <taxon>Cypriniformes</taxon>
        <taxon>Danionidae</taxon>
        <taxon>Danioninae</taxon>
        <taxon>Danio</taxon>
    </lineage>
</organism>
<gene>
    <name type="primary">msgn1</name>
    <name type="synonym">mespo</name>
    <name type="ORF">si:ch211-222h17.1</name>
</gene>
<comment type="function">
    <text evidence="1 5">Involved in specifying the paraxial, but not dorsal, mesoderm. May regulate the expression of T-box transcription factors required for mesoderm formation and differentiation (By similarity).</text>
</comment>
<comment type="subcellular location">
    <subcellularLocation>
        <location evidence="2">Nucleus</location>
    </subcellularLocation>
</comment>
<comment type="tissue specificity">
    <text>Coexpression of ntl and spt is required for expression.</text>
</comment>
<comment type="developmental stage">
    <text evidence="4">Expression is first detected in the marginal zone of the blastoderm. Expression becomes more apparent at the germ-ring stage. In the early gastrula, expressed only in hypoblast cells of the germ ring. At mid-gastrula stage, expressed in ventrolateral mesoderm and is subsequently restricted to the segmental plate at late gastrula stage. At the segmentation period, expressed in the presomitic mesoderm including the tailbud. Expression is also detected in the adaxial cells in the vicinity of the presomitic mesoderm.</text>
</comment>
<keyword id="KW-0217">Developmental protein</keyword>
<keyword id="KW-0221">Differentiation</keyword>
<keyword id="KW-0238">DNA-binding</keyword>
<keyword id="KW-0539">Nucleus</keyword>
<keyword id="KW-1185">Reference proteome</keyword>
<keyword id="KW-0804">Transcription</keyword>
<keyword id="KW-0805">Transcription regulation</keyword>
<evidence type="ECO:0000250" key="1"/>
<evidence type="ECO:0000255" key="2">
    <source>
        <dbReference type="PROSITE-ProRule" id="PRU00981"/>
    </source>
</evidence>
<evidence type="ECO:0000256" key="3">
    <source>
        <dbReference type="SAM" id="MobiDB-lite"/>
    </source>
</evidence>
<evidence type="ECO:0000269" key="4">
    <source>
    </source>
</evidence>
<evidence type="ECO:0000269" key="5">
    <source>
    </source>
</evidence>
<evidence type="ECO:0000305" key="6"/>
<accession>Q90ZL1</accession>
<accession>A8E564</accession>
<accession>Q568W3</accession>
<name>MSGN1_DANRE</name>
<proteinExistence type="evidence at transcript level"/>